<feature type="chain" id="PRO_1000059224" description="Bifunctional uridylyltransferase/uridylyl-removing enzyme">
    <location>
        <begin position="1"/>
        <end position="899"/>
    </location>
</feature>
<feature type="domain" description="HD" evidence="2">
    <location>
        <begin position="461"/>
        <end position="583"/>
    </location>
</feature>
<feature type="domain" description="ACT 1" evidence="1">
    <location>
        <begin position="706"/>
        <end position="784"/>
    </location>
</feature>
<feature type="domain" description="ACT 2" evidence="1">
    <location>
        <begin position="816"/>
        <end position="897"/>
    </location>
</feature>
<feature type="region of interest" description="Uridylyltransferase">
    <location>
        <begin position="1"/>
        <end position="342"/>
    </location>
</feature>
<feature type="region of interest" description="Uridylyl-removing">
    <location>
        <begin position="343"/>
        <end position="705"/>
    </location>
</feature>
<proteinExistence type="inferred from homology"/>
<comment type="function">
    <text evidence="1">Modifies, by uridylylation and deuridylylation, the PII regulatory proteins (GlnB and homologs), in response to the nitrogen status of the cell that GlnD senses through the glutamine level. Under low glutamine levels, catalyzes the conversion of the PII proteins and UTP to PII-UMP and PPi, while under higher glutamine levels, GlnD hydrolyzes PII-UMP to PII and UMP (deuridylylation). Thus, controls uridylylation state and activity of the PII proteins, and plays an important role in the regulation of nitrogen assimilation and metabolism.</text>
</comment>
<comment type="catalytic activity">
    <reaction evidence="1">
        <text>[protein-PII]-L-tyrosine + UTP = [protein-PII]-uridylyl-L-tyrosine + diphosphate</text>
        <dbReference type="Rhea" id="RHEA:13673"/>
        <dbReference type="Rhea" id="RHEA-COMP:12147"/>
        <dbReference type="Rhea" id="RHEA-COMP:12148"/>
        <dbReference type="ChEBI" id="CHEBI:33019"/>
        <dbReference type="ChEBI" id="CHEBI:46398"/>
        <dbReference type="ChEBI" id="CHEBI:46858"/>
        <dbReference type="ChEBI" id="CHEBI:90602"/>
        <dbReference type="EC" id="2.7.7.59"/>
    </reaction>
</comment>
<comment type="catalytic activity">
    <reaction evidence="1">
        <text>[protein-PII]-uridylyl-L-tyrosine + H2O = [protein-PII]-L-tyrosine + UMP + H(+)</text>
        <dbReference type="Rhea" id="RHEA:48600"/>
        <dbReference type="Rhea" id="RHEA-COMP:12147"/>
        <dbReference type="Rhea" id="RHEA-COMP:12148"/>
        <dbReference type="ChEBI" id="CHEBI:15377"/>
        <dbReference type="ChEBI" id="CHEBI:15378"/>
        <dbReference type="ChEBI" id="CHEBI:46858"/>
        <dbReference type="ChEBI" id="CHEBI:57865"/>
        <dbReference type="ChEBI" id="CHEBI:90602"/>
    </reaction>
</comment>
<comment type="cofactor">
    <cofactor evidence="1">
        <name>Mg(2+)</name>
        <dbReference type="ChEBI" id="CHEBI:18420"/>
    </cofactor>
</comment>
<comment type="activity regulation">
    <text evidence="1">Uridylyltransferase (UTase) activity is inhibited by glutamine, while glutamine activates uridylyl-removing (UR) activity.</text>
</comment>
<comment type="domain">
    <text evidence="1">Has four distinct domains: an N-terminal nucleotidyltransferase (NT) domain responsible for UTase activity, a central HD domain that encodes UR activity, and two C-terminal ACT domains that seem to have a role in glutamine sensing.</text>
</comment>
<comment type="similarity">
    <text evidence="1">Belongs to the GlnD family.</text>
</comment>
<name>GLND_ECTM1</name>
<organism>
    <name type="scientific">Ectopseudomonas mendocina (strain ymp)</name>
    <name type="common">Pseudomonas mendocina</name>
    <dbReference type="NCBI Taxonomy" id="399739"/>
    <lineage>
        <taxon>Bacteria</taxon>
        <taxon>Pseudomonadati</taxon>
        <taxon>Pseudomonadota</taxon>
        <taxon>Gammaproteobacteria</taxon>
        <taxon>Pseudomonadales</taxon>
        <taxon>Pseudomonadaceae</taxon>
        <taxon>Ectopseudomonas</taxon>
    </lineage>
</organism>
<dbReference type="EC" id="2.7.7.59" evidence="1"/>
<dbReference type="EC" id="3.1.4.-" evidence="1"/>
<dbReference type="EMBL" id="CP000680">
    <property type="protein sequence ID" value="ABP85809.1"/>
    <property type="molecule type" value="Genomic_DNA"/>
</dbReference>
<dbReference type="SMR" id="A4XWU3"/>
<dbReference type="STRING" id="399739.Pmen_3055"/>
<dbReference type="KEGG" id="pmy:Pmen_3055"/>
<dbReference type="PATRIC" id="fig|399739.8.peg.3101"/>
<dbReference type="eggNOG" id="COG2844">
    <property type="taxonomic scope" value="Bacteria"/>
</dbReference>
<dbReference type="HOGENOM" id="CLU_012833_0_0_6"/>
<dbReference type="OrthoDB" id="9758038at2"/>
<dbReference type="GO" id="GO:0008773">
    <property type="term" value="F:[protein-PII] uridylyltransferase activity"/>
    <property type="evidence" value="ECO:0007669"/>
    <property type="project" value="UniProtKB-UniRule"/>
</dbReference>
<dbReference type="GO" id="GO:0008081">
    <property type="term" value="F:phosphoric diester hydrolase activity"/>
    <property type="evidence" value="ECO:0007669"/>
    <property type="project" value="UniProtKB-UniRule"/>
</dbReference>
<dbReference type="GO" id="GO:0006808">
    <property type="term" value="P:regulation of nitrogen utilization"/>
    <property type="evidence" value="ECO:0007669"/>
    <property type="project" value="UniProtKB-UniRule"/>
</dbReference>
<dbReference type="CDD" id="cd04899">
    <property type="entry name" value="ACT_ACR-UUR-like_2"/>
    <property type="match status" value="1"/>
</dbReference>
<dbReference type="CDD" id="cd04900">
    <property type="entry name" value="ACT_UUR-like_1"/>
    <property type="match status" value="1"/>
</dbReference>
<dbReference type="CDD" id="cd00077">
    <property type="entry name" value="HDc"/>
    <property type="match status" value="1"/>
</dbReference>
<dbReference type="CDD" id="cd05401">
    <property type="entry name" value="NT_GlnE_GlnD_like"/>
    <property type="match status" value="1"/>
</dbReference>
<dbReference type="FunFam" id="1.10.3090.10:FF:000005">
    <property type="entry name" value="Bifunctional uridylyltransferase/uridylyl-removing enzyme"/>
    <property type="match status" value="1"/>
</dbReference>
<dbReference type="Gene3D" id="3.30.460.10">
    <property type="entry name" value="Beta Polymerase, domain 2"/>
    <property type="match status" value="1"/>
</dbReference>
<dbReference type="Gene3D" id="1.10.3090.10">
    <property type="entry name" value="cca-adding enzyme, domain 2"/>
    <property type="match status" value="1"/>
</dbReference>
<dbReference type="HAMAP" id="MF_00277">
    <property type="entry name" value="PII_uridylyl_transf"/>
    <property type="match status" value="1"/>
</dbReference>
<dbReference type="InterPro" id="IPR045865">
    <property type="entry name" value="ACT-like_dom_sf"/>
</dbReference>
<dbReference type="InterPro" id="IPR002912">
    <property type="entry name" value="ACT_dom"/>
</dbReference>
<dbReference type="InterPro" id="IPR003607">
    <property type="entry name" value="HD/PDEase_dom"/>
</dbReference>
<dbReference type="InterPro" id="IPR006674">
    <property type="entry name" value="HD_domain"/>
</dbReference>
<dbReference type="InterPro" id="IPR043519">
    <property type="entry name" value="NT_sf"/>
</dbReference>
<dbReference type="InterPro" id="IPR013546">
    <property type="entry name" value="PII_UdlTrfase/GS_AdlTrfase"/>
</dbReference>
<dbReference type="InterPro" id="IPR002934">
    <property type="entry name" value="Polymerase_NTP_transf_dom"/>
</dbReference>
<dbReference type="InterPro" id="IPR010043">
    <property type="entry name" value="UTase/UR"/>
</dbReference>
<dbReference type="NCBIfam" id="NF001366">
    <property type="entry name" value="PRK00275.1"/>
    <property type="match status" value="1"/>
</dbReference>
<dbReference type="NCBIfam" id="TIGR01693">
    <property type="entry name" value="UTase_glnD"/>
    <property type="match status" value="1"/>
</dbReference>
<dbReference type="PANTHER" id="PTHR47320">
    <property type="entry name" value="BIFUNCTIONAL URIDYLYLTRANSFERASE/URIDYLYL-REMOVING ENZYME"/>
    <property type="match status" value="1"/>
</dbReference>
<dbReference type="PANTHER" id="PTHR47320:SF1">
    <property type="entry name" value="BIFUNCTIONAL URIDYLYLTRANSFERASE_URIDYLYL-REMOVING ENZYME"/>
    <property type="match status" value="1"/>
</dbReference>
<dbReference type="Pfam" id="PF01842">
    <property type="entry name" value="ACT"/>
    <property type="match status" value="1"/>
</dbReference>
<dbReference type="Pfam" id="PF08335">
    <property type="entry name" value="GlnD_UR_UTase"/>
    <property type="match status" value="1"/>
</dbReference>
<dbReference type="Pfam" id="PF01966">
    <property type="entry name" value="HD"/>
    <property type="match status" value="1"/>
</dbReference>
<dbReference type="Pfam" id="PF01909">
    <property type="entry name" value="NTP_transf_2"/>
    <property type="match status" value="1"/>
</dbReference>
<dbReference type="PIRSF" id="PIRSF006288">
    <property type="entry name" value="PII_uridyltransf"/>
    <property type="match status" value="1"/>
</dbReference>
<dbReference type="SMART" id="SM00471">
    <property type="entry name" value="HDc"/>
    <property type="match status" value="1"/>
</dbReference>
<dbReference type="SUPFAM" id="SSF55021">
    <property type="entry name" value="ACT-like"/>
    <property type="match status" value="2"/>
</dbReference>
<dbReference type="SUPFAM" id="SSF109604">
    <property type="entry name" value="HD-domain/PDEase-like"/>
    <property type="match status" value="1"/>
</dbReference>
<dbReference type="SUPFAM" id="SSF81301">
    <property type="entry name" value="Nucleotidyltransferase"/>
    <property type="match status" value="1"/>
</dbReference>
<dbReference type="SUPFAM" id="SSF81593">
    <property type="entry name" value="Nucleotidyltransferase substrate binding subunit/domain"/>
    <property type="match status" value="1"/>
</dbReference>
<dbReference type="PROSITE" id="PS51671">
    <property type="entry name" value="ACT"/>
    <property type="match status" value="2"/>
</dbReference>
<dbReference type="PROSITE" id="PS51831">
    <property type="entry name" value="HD"/>
    <property type="match status" value="1"/>
</dbReference>
<gene>
    <name evidence="1" type="primary">glnD</name>
    <name type="ordered locus">Pmen_3055</name>
</gene>
<keyword id="KW-0378">Hydrolase</keyword>
<keyword id="KW-0460">Magnesium</keyword>
<keyword id="KW-0511">Multifunctional enzyme</keyword>
<keyword id="KW-0548">Nucleotidyltransferase</keyword>
<keyword id="KW-0677">Repeat</keyword>
<keyword id="KW-0808">Transferase</keyword>
<reference key="1">
    <citation type="submission" date="2007-04" db="EMBL/GenBank/DDBJ databases">
        <title>Complete sequence of Pseudomonas mendocina ymp.</title>
        <authorList>
            <consortium name="US DOE Joint Genome Institute"/>
            <person name="Copeland A."/>
            <person name="Lucas S."/>
            <person name="Lapidus A."/>
            <person name="Barry K."/>
            <person name="Glavina del Rio T."/>
            <person name="Dalin E."/>
            <person name="Tice H."/>
            <person name="Pitluck S."/>
            <person name="Kiss H."/>
            <person name="Brettin T."/>
            <person name="Detter J.C."/>
            <person name="Bruce D."/>
            <person name="Han C."/>
            <person name="Schmutz J."/>
            <person name="Larimer F."/>
            <person name="Land M."/>
            <person name="Hauser L."/>
            <person name="Kyrpides N."/>
            <person name="Mikhailova N."/>
            <person name="Hersman L."/>
            <person name="Dubois J."/>
            <person name="Maurice P."/>
            <person name="Richardson P."/>
        </authorList>
    </citation>
    <scope>NUCLEOTIDE SEQUENCE [LARGE SCALE GENOMIC DNA]</scope>
    <source>
        <strain>ymp</strain>
    </source>
</reference>
<evidence type="ECO:0000255" key="1">
    <source>
        <dbReference type="HAMAP-Rule" id="MF_00277"/>
    </source>
</evidence>
<evidence type="ECO:0000255" key="2">
    <source>
        <dbReference type="PROSITE-ProRule" id="PRU01175"/>
    </source>
</evidence>
<protein>
    <recommendedName>
        <fullName evidence="1">Bifunctional uridylyltransferase/uridylyl-removing enzyme</fullName>
        <shortName evidence="1">UTase/UR</shortName>
    </recommendedName>
    <alternativeName>
        <fullName evidence="1">Bifunctional [protein-PII] modification enzyme</fullName>
    </alternativeName>
    <alternativeName>
        <fullName evidence="1">Bifunctional nitrogen sensor protein</fullName>
    </alternativeName>
    <domain>
        <recommendedName>
            <fullName evidence="1">[Protein-PII] uridylyltransferase</fullName>
            <shortName evidence="1">PII uridylyltransferase</shortName>
            <shortName evidence="1">UTase</shortName>
            <ecNumber evidence="1">2.7.7.59</ecNumber>
        </recommendedName>
    </domain>
    <domain>
        <recommendedName>
            <fullName evidence="1">[Protein-PII]-UMP uridylyl-removing enzyme</fullName>
            <shortName evidence="1">UR</shortName>
            <ecNumber evidence="1">3.1.4.-</ecNumber>
        </recommendedName>
    </domain>
</protein>
<sequence length="899" mass="102887">MPQMDPELFDRGQFQAELALKSSPIAAFKKAIRHAREVLDARFKGGRDIRRLVEDRAWFVDQILQEAWKRFAWSEDADIALLAVGGYGRGELHPYSDIDLLILLDSSDHEIFREPIEGFLTLLWDIGLEVGQSVRSVDECAEEARADLTVITNLMESRTIAGPEHLRQRMQQVTSSEQMWPSKHFYLAKREERKARHAKYNDTEYNLEPNVKGSPGGLRDIQTVLWVARRQFGTLNLQALVGQGFLLESEYALLSSSQEFLWKVRYALHMLAGRAEDRLLFDYQARIAALFGYQDGDGKRSIEHFMQKYYRVVMGISELSDLINQHFEEVILRAGESGPATPLNSRFQVRDGYIEVTHPNVFKRTPFAILEVFVLMAQNPEIKGVRADSIRLLRDSRHLIDDDFRKDIRNTSLFIELFKCKEGIHRNLRRMNRYGILGRYLPEFGHIVGQMQHDLFHIYTVDAHTLNLIKHLRKFRWPELAEKFPLASKLIDRLPKPELIYLAGLYHDIGKGRGGDHSELGAVDAEAFARRHQLPAWDSALIVWLVQHHLVMSTTAQRKDLSDPQVIHDFAQFVGDQTHLDYLYVLTVADINATNPSLWNSWRASLLRQLYTETKRALRRGLENPLDREEQIRQTQSAALDILVRGGTDPDDAEQLWSQLGDDYFLRHTANDVAWHTEAILQHPADSGPLVLIKETTQREFEGGTQIFIYAPDQHDFFAVTVAAMSQLNLNIHDARIITSTSQFTLDTYVVLDADGGSIGDNPARIKQIREGLIEALKNPDEYPTIIQRRVPRQLKHFAFAPQVTIHNDAQRPVTILELTAPDRPGLLARIGRIFLEYDLSLQNAKIATLGERVEDVFFVTDANNQPLSDPELCARLQETIVRRLSEPSAQPQSLQIDI</sequence>
<accession>A4XWU3</accession>